<comment type="function">
    <text>Acts as an actin bundling protein. May play a pivotal role in photoreceptor cell-specific events, such as disk morphogenesis.</text>
</comment>
<comment type="interaction">
    <interactant intactId="EBI-21017948">
        <id>O14926</id>
    </interactant>
    <interactant intactId="EBI-399080">
        <id>Q92993</id>
        <label>KAT5</label>
    </interactant>
    <organismsDiffer>false</organismsDiffer>
    <experiments>3</experiments>
</comment>
<comment type="interaction">
    <interactant intactId="EBI-21017948">
        <id>O14926</id>
    </interactant>
    <interactant intactId="EBI-11742507">
        <id>Q8TAP4-4</id>
        <label>LMO3</label>
    </interactant>
    <organismsDiffer>false</organismsDiffer>
    <experiments>3</experiments>
</comment>
<comment type="interaction">
    <interactant intactId="EBI-21017948">
        <id>O14926</id>
    </interactant>
    <interactant intactId="EBI-1383528">
        <id>P17252</id>
        <label>PRKCA</label>
    </interactant>
    <organismsDiffer>false</organismsDiffer>
    <experiments>3</experiments>
</comment>
<comment type="interaction">
    <interactant intactId="EBI-21017948">
        <id>O14926</id>
    </interactant>
    <interactant intactId="EBI-9090795">
        <id>Q15047-2</id>
        <label>SETDB1</label>
    </interactant>
    <organismsDiffer>false</organismsDiffer>
    <experiments>3</experiments>
</comment>
<comment type="interaction">
    <interactant intactId="EBI-21017948">
        <id>O14926</id>
    </interactant>
    <interactant intactId="EBI-359832">
        <id>P61981</id>
        <label>YWHAG</label>
    </interactant>
    <organismsDiffer>false</organismsDiffer>
    <experiments>3</experiments>
</comment>
<comment type="subcellular location">
    <subcellularLocation>
        <location evidence="1">Cytoplasm</location>
        <location evidence="1">Cytoskeleton</location>
    </subcellularLocation>
    <subcellularLocation>
        <location evidence="1">Cell projection</location>
        <location evidence="1">Stereocilium</location>
    </subcellularLocation>
</comment>
<comment type="alternative products">
    <event type="alternative splicing"/>
    <isoform>
        <id>O14926-1</id>
        <name>1</name>
        <sequence type="displayed"/>
    </isoform>
    <isoform>
        <id>O14926-2</id>
        <name>2</name>
        <sequence type="described" ref="VSP_047285"/>
    </isoform>
</comment>
<comment type="tissue specificity">
    <text>Localized specifically in the outer and inner segments of the photoreceptor cells in the retina.</text>
</comment>
<comment type="disease" evidence="2">
    <disease id="DI-00990">
        <name>Retinitis pigmentosa 30</name>
        <acronym>RP30</acronym>
        <description>A retinal dystrophy belonging to the group of pigmentary retinopathies. Retinitis pigmentosa is characterized by retinal pigment deposits visible on fundus examination and primary loss of rod photoreceptor cells followed by secondary loss of cone photoreceptors. Patients typically have night vision blindness and loss of midperipheral visual field. As their condition progresses, they lose their far peripheral visual field and eventually central vision as well.</description>
        <dbReference type="MIM" id="607921"/>
    </disease>
    <text>The disease is caused by variants affecting the gene represented in this entry.</text>
</comment>
<comment type="similarity">
    <text evidence="3">Belongs to the fascin family.</text>
</comment>
<protein>
    <recommendedName>
        <fullName>Fascin-2</fullName>
    </recommendedName>
    <alternativeName>
        <fullName>Retinal fascin</fullName>
    </alternativeName>
</protein>
<keyword id="KW-0009">Actin-binding</keyword>
<keyword id="KW-0025">Alternative splicing</keyword>
<keyword id="KW-0966">Cell projection</keyword>
<keyword id="KW-0963">Cytoplasm</keyword>
<keyword id="KW-0206">Cytoskeleton</keyword>
<keyword id="KW-1267">Proteomics identification</keyword>
<keyword id="KW-1185">Reference proteome</keyword>
<keyword id="KW-0682">Retinitis pigmentosa</keyword>
<accession>O14926</accession>
<accession>A0AVC4</accession>
<accession>A8MRA6</accession>
<feature type="chain" id="PRO_0000219382" description="Fascin-2">
    <location>
        <begin position="1"/>
        <end position="492"/>
    </location>
</feature>
<feature type="splice variant" id="VSP_047285" description="In isoform 2." evidence="3">
    <original>V</original>
    <variation>VGPPPRPAWTGKVAGGAAQQTLSPP</variation>
    <location>
        <position position="368"/>
    </location>
</feature>
<sequence length="492" mass="55057">MPTNGLHQVLKIQFGLVNDTDRYLTAESFGFKVNASAPSLKRKQTWVLEPDPGQGTAVLLRSSHLGRYLSAEEDGRVACEAEQPGRDCRFLVLPQPDGRWVLRSEPHGRFFGGTEDQLSCFATAVSPAELWTVHLAIHPQAHLLSVSRRRYVHLCPREDEMAADGDKPWGVDALLTLIFRSRRYCLKSCDSRYLRSDGRLVWEPEPRACYTLEFKAGKLAFKDCDGHYLAPVGPAGTLKAGRNTRPGKDELFDLEESHPQVVLVAANHRYVSVRQGVNVSANQDDELDHETFLMQIDQETKKCTFYSSTGGYWTLVTHGGIHATATQVSANTMFEMEWRGRRVALKASNGRYVCMKKNGQLAAISDFVGKDEEFTLKLINRPILVLRGLDGFVCHHRGSNQLDTNRSVYDVFHLSFSDGAYRIRGRDGGFWYTGSHGSVCSDGERAEDFVFEFRERGRLAIRARSGKYLRGGASGLLRADADAPAGTALWEY</sequence>
<gene>
    <name type="primary">FSCN2</name>
</gene>
<organism>
    <name type="scientific">Homo sapiens</name>
    <name type="common">Human</name>
    <dbReference type="NCBI Taxonomy" id="9606"/>
    <lineage>
        <taxon>Eukaryota</taxon>
        <taxon>Metazoa</taxon>
        <taxon>Chordata</taxon>
        <taxon>Craniata</taxon>
        <taxon>Vertebrata</taxon>
        <taxon>Euteleostomi</taxon>
        <taxon>Mammalia</taxon>
        <taxon>Eutheria</taxon>
        <taxon>Euarchontoglires</taxon>
        <taxon>Primates</taxon>
        <taxon>Haplorrhini</taxon>
        <taxon>Catarrhini</taxon>
        <taxon>Hominidae</taxon>
        <taxon>Homo</taxon>
    </lineage>
</organism>
<name>FSCN2_HUMAN</name>
<dbReference type="EMBL" id="AF030165">
    <property type="protein sequence ID" value="AAB86481.1"/>
    <property type="molecule type" value="mRNA"/>
</dbReference>
<dbReference type="EMBL" id="AF066065">
    <property type="protein sequence ID" value="AAC18604.1"/>
    <property type="molecule type" value="Genomic_DNA"/>
</dbReference>
<dbReference type="EMBL" id="AF066062">
    <property type="protein sequence ID" value="AAC18604.1"/>
    <property type="status" value="JOINED"/>
    <property type="molecule type" value="Genomic_DNA"/>
</dbReference>
<dbReference type="EMBL" id="AF066063">
    <property type="protein sequence ID" value="AAC18604.1"/>
    <property type="status" value="JOINED"/>
    <property type="molecule type" value="Genomic_DNA"/>
</dbReference>
<dbReference type="EMBL" id="AF066064">
    <property type="protein sequence ID" value="AAC18604.1"/>
    <property type="status" value="JOINED"/>
    <property type="molecule type" value="Genomic_DNA"/>
</dbReference>
<dbReference type="EMBL" id="AC137896">
    <property type="status" value="NOT_ANNOTATED_CDS"/>
    <property type="molecule type" value="Genomic_DNA"/>
</dbReference>
<dbReference type="EMBL" id="AC139149">
    <property type="status" value="NOT_ANNOTATED_CDS"/>
    <property type="molecule type" value="Genomic_DNA"/>
</dbReference>
<dbReference type="EMBL" id="BC126295">
    <property type="protein sequence ID" value="AAI26296.1"/>
    <property type="molecule type" value="mRNA"/>
</dbReference>
<dbReference type="EMBL" id="BC130330">
    <property type="protein sequence ID" value="AAI30331.1"/>
    <property type="molecule type" value="mRNA"/>
</dbReference>
<dbReference type="CCDS" id="CCDS45810.1">
    <molecule id="O14926-2"/>
</dbReference>
<dbReference type="CCDS" id="CCDS45811.1">
    <molecule id="O14926-1"/>
</dbReference>
<dbReference type="RefSeq" id="NP_001070650.1">
    <molecule id="O14926-2"/>
    <property type="nucleotide sequence ID" value="NM_001077182.3"/>
</dbReference>
<dbReference type="RefSeq" id="NP_036550.1">
    <molecule id="O14926-1"/>
    <property type="nucleotide sequence ID" value="NM_012418.4"/>
</dbReference>
<dbReference type="RefSeq" id="XP_011522889.1">
    <molecule id="O14926-2"/>
    <property type="nucleotide sequence ID" value="XM_011524587.3"/>
</dbReference>
<dbReference type="RefSeq" id="XP_011522892.1">
    <molecule id="O14926-2"/>
    <property type="nucleotide sequence ID" value="XM_011524590.3"/>
</dbReference>
<dbReference type="RefSeq" id="XP_047291676.1">
    <molecule id="O14926-2"/>
    <property type="nucleotide sequence ID" value="XM_047435720.1"/>
</dbReference>
<dbReference type="RefSeq" id="XP_047291677.1">
    <molecule id="O14926-1"/>
    <property type="nucleotide sequence ID" value="XM_047435721.1"/>
</dbReference>
<dbReference type="RefSeq" id="XP_054171631.1">
    <molecule id="O14926-2"/>
    <property type="nucleotide sequence ID" value="XM_054315656.1"/>
</dbReference>
<dbReference type="RefSeq" id="XP_054171632.1">
    <molecule id="O14926-2"/>
    <property type="nucleotide sequence ID" value="XM_054315657.1"/>
</dbReference>
<dbReference type="RefSeq" id="XP_054171633.1">
    <molecule id="O14926-2"/>
    <property type="nucleotide sequence ID" value="XM_054315658.1"/>
</dbReference>
<dbReference type="RefSeq" id="XP_054171634.1">
    <molecule id="O14926-2"/>
    <property type="nucleotide sequence ID" value="XM_054315659.1"/>
</dbReference>
<dbReference type="RefSeq" id="XP_054171635.1">
    <molecule id="O14926-1"/>
    <property type="nucleotide sequence ID" value="XM_054315660.1"/>
</dbReference>
<dbReference type="RefSeq" id="XP_054171636.1">
    <molecule id="O14926-1"/>
    <property type="nucleotide sequence ID" value="XM_054315661.1"/>
</dbReference>
<dbReference type="SMR" id="O14926"/>
<dbReference type="BioGRID" id="117327">
    <property type="interactions" value="8"/>
</dbReference>
<dbReference type="FunCoup" id="O14926">
    <property type="interactions" value="449"/>
</dbReference>
<dbReference type="IntAct" id="O14926">
    <property type="interactions" value="10"/>
</dbReference>
<dbReference type="STRING" id="9606.ENSP00000334665"/>
<dbReference type="iPTMnet" id="O14926"/>
<dbReference type="PhosphoSitePlus" id="O14926"/>
<dbReference type="BioMuta" id="FSCN2"/>
<dbReference type="MassIVE" id="O14926"/>
<dbReference type="PaxDb" id="9606-ENSP00000334665"/>
<dbReference type="PeptideAtlas" id="O14926"/>
<dbReference type="ProteomicsDB" id="1955"/>
<dbReference type="ProteomicsDB" id="48307">
    <molecule id="O14926-1"/>
</dbReference>
<dbReference type="Antibodypedia" id="32856">
    <property type="antibodies" value="123 antibodies from 26 providers"/>
</dbReference>
<dbReference type="DNASU" id="25794"/>
<dbReference type="Ensembl" id="ENST00000334850.7">
    <molecule id="O14926-2"/>
    <property type="protein sequence ID" value="ENSP00000334665.7"/>
    <property type="gene ID" value="ENSG00000186765.12"/>
</dbReference>
<dbReference type="Ensembl" id="ENST00000417245.7">
    <molecule id="O14926-1"/>
    <property type="protein sequence ID" value="ENSP00000388716.2"/>
    <property type="gene ID" value="ENSG00000186765.12"/>
</dbReference>
<dbReference type="GeneID" id="25794"/>
<dbReference type="KEGG" id="hsa:25794"/>
<dbReference type="MANE-Select" id="ENST00000417245.7">
    <property type="protein sequence ID" value="ENSP00000388716.2"/>
    <property type="RefSeq nucleotide sequence ID" value="NM_012418.4"/>
    <property type="RefSeq protein sequence ID" value="NP_036550.1"/>
</dbReference>
<dbReference type="UCSC" id="uc010wuo.3">
    <molecule id="O14926-1"/>
    <property type="organism name" value="human"/>
</dbReference>
<dbReference type="AGR" id="HGNC:3960"/>
<dbReference type="CTD" id="25794"/>
<dbReference type="DisGeNET" id="25794"/>
<dbReference type="GeneCards" id="FSCN2"/>
<dbReference type="GeneReviews" id="FSCN2"/>
<dbReference type="HGNC" id="HGNC:3960">
    <property type="gene designation" value="FSCN2"/>
</dbReference>
<dbReference type="HPA" id="ENSG00000186765">
    <property type="expression patterns" value="Tissue enhanced (pancreas, retina)"/>
</dbReference>
<dbReference type="MalaCards" id="FSCN2"/>
<dbReference type="MIM" id="607643">
    <property type="type" value="gene"/>
</dbReference>
<dbReference type="MIM" id="607921">
    <property type="type" value="phenotype"/>
</dbReference>
<dbReference type="neXtProt" id="NX_O14926"/>
<dbReference type="OpenTargets" id="ENSG00000186765"/>
<dbReference type="Orphanet" id="791">
    <property type="disease" value="Retinitis pigmentosa"/>
</dbReference>
<dbReference type="PharmGKB" id="PA28378"/>
<dbReference type="VEuPathDB" id="HostDB:ENSG00000186765"/>
<dbReference type="eggNOG" id="ENOG502QPRX">
    <property type="taxonomic scope" value="Eukaryota"/>
</dbReference>
<dbReference type="GeneTree" id="ENSGT00950000183157"/>
<dbReference type="HOGENOM" id="CLU_030960_2_0_1"/>
<dbReference type="InParanoid" id="O14926"/>
<dbReference type="OMA" id="EPYQRYF"/>
<dbReference type="OrthoDB" id="10259868at2759"/>
<dbReference type="PAN-GO" id="O14926">
    <property type="GO annotations" value="6 GO annotations based on evolutionary models"/>
</dbReference>
<dbReference type="PhylomeDB" id="O14926"/>
<dbReference type="TreeFam" id="TF323992"/>
<dbReference type="PathwayCommons" id="O14926"/>
<dbReference type="Reactome" id="R-HSA-9662360">
    <property type="pathway name" value="Sensory processing of sound by inner hair cells of the cochlea"/>
</dbReference>
<dbReference type="Reactome" id="R-HSA-9662361">
    <property type="pathway name" value="Sensory processing of sound by outer hair cells of the cochlea"/>
</dbReference>
<dbReference type="SignaLink" id="O14926"/>
<dbReference type="BioGRID-ORCS" id="25794">
    <property type="hits" value="18 hits in 1138 CRISPR screens"/>
</dbReference>
<dbReference type="ChiTaRS" id="FSCN2">
    <property type="organism name" value="human"/>
</dbReference>
<dbReference type="GeneWiki" id="FSCN2"/>
<dbReference type="GenomeRNAi" id="25794"/>
<dbReference type="Pharos" id="O14926">
    <property type="development level" value="Tbio"/>
</dbReference>
<dbReference type="PRO" id="PR:O14926"/>
<dbReference type="Proteomes" id="UP000005640">
    <property type="component" value="Chromosome 17"/>
</dbReference>
<dbReference type="RNAct" id="O14926">
    <property type="molecule type" value="protein"/>
</dbReference>
<dbReference type="Bgee" id="ENSG00000186765">
    <property type="expression patterns" value="Expressed in middle frontal gyrus and 91 other cell types or tissues"/>
</dbReference>
<dbReference type="GO" id="GO:0015629">
    <property type="term" value="C:actin cytoskeleton"/>
    <property type="evidence" value="ECO:0000250"/>
    <property type="project" value="UniProtKB"/>
</dbReference>
<dbReference type="GO" id="GO:0005737">
    <property type="term" value="C:cytoplasm"/>
    <property type="evidence" value="ECO:0000318"/>
    <property type="project" value="GO_Central"/>
</dbReference>
<dbReference type="GO" id="GO:0032420">
    <property type="term" value="C:stereocilium"/>
    <property type="evidence" value="ECO:0007669"/>
    <property type="project" value="UniProtKB-SubCell"/>
</dbReference>
<dbReference type="GO" id="GO:0003779">
    <property type="term" value="F:actin binding"/>
    <property type="evidence" value="ECO:0000250"/>
    <property type="project" value="UniProtKB"/>
</dbReference>
<dbReference type="GO" id="GO:0051015">
    <property type="term" value="F:actin filament binding"/>
    <property type="evidence" value="ECO:0000250"/>
    <property type="project" value="UniProtKB"/>
</dbReference>
<dbReference type="GO" id="GO:0030674">
    <property type="term" value="F:protein-macromolecule adaptor activity"/>
    <property type="evidence" value="ECO:0007669"/>
    <property type="project" value="InterPro"/>
</dbReference>
<dbReference type="GO" id="GO:0030036">
    <property type="term" value="P:actin cytoskeleton organization"/>
    <property type="evidence" value="ECO:0000250"/>
    <property type="project" value="UniProtKB"/>
</dbReference>
<dbReference type="GO" id="GO:0051017">
    <property type="term" value="P:actin filament bundle assembly"/>
    <property type="evidence" value="ECO:0000318"/>
    <property type="project" value="GO_Central"/>
</dbReference>
<dbReference type="GO" id="GO:0009653">
    <property type="term" value="P:anatomical structure morphogenesis"/>
    <property type="evidence" value="ECO:0000304"/>
    <property type="project" value="ProtInc"/>
</dbReference>
<dbReference type="GO" id="GO:0016477">
    <property type="term" value="P:cell migration"/>
    <property type="evidence" value="ECO:0000318"/>
    <property type="project" value="GO_Central"/>
</dbReference>
<dbReference type="GO" id="GO:0007163">
    <property type="term" value="P:establishment or maintenance of cell polarity"/>
    <property type="evidence" value="ECO:0000318"/>
    <property type="project" value="GO_Central"/>
</dbReference>
<dbReference type="GO" id="GO:0042462">
    <property type="term" value="P:eye photoreceptor cell development"/>
    <property type="evidence" value="ECO:0007669"/>
    <property type="project" value="Ensembl"/>
</dbReference>
<dbReference type="GO" id="GO:0007601">
    <property type="term" value="P:visual perception"/>
    <property type="evidence" value="ECO:0000304"/>
    <property type="project" value="ProtInc"/>
</dbReference>
<dbReference type="CDD" id="cd23345">
    <property type="entry name" value="beta-trefoil_FSCN2_rpt1"/>
    <property type="match status" value="1"/>
</dbReference>
<dbReference type="CDD" id="cd23349">
    <property type="entry name" value="beta-trefoil_FSCN2_rpt2"/>
    <property type="match status" value="1"/>
</dbReference>
<dbReference type="CDD" id="cd23353">
    <property type="entry name" value="beta-trefoil_FSCN2_rpt3"/>
    <property type="match status" value="1"/>
</dbReference>
<dbReference type="CDD" id="cd23357">
    <property type="entry name" value="beta-trefoil_FSCN2_rpt4"/>
    <property type="match status" value="1"/>
</dbReference>
<dbReference type="FunFam" id="2.80.10.50:FF:000008">
    <property type="entry name" value="Fascin"/>
    <property type="match status" value="1"/>
</dbReference>
<dbReference type="FunFam" id="2.80.10.50:FF:000010">
    <property type="entry name" value="Fascin"/>
    <property type="match status" value="1"/>
</dbReference>
<dbReference type="FunFam" id="2.80.10.50:FF:000015">
    <property type="entry name" value="Fascin"/>
    <property type="match status" value="1"/>
</dbReference>
<dbReference type="FunFam" id="2.80.10.50:FF:000037">
    <property type="entry name" value="Fascin"/>
    <property type="match status" value="1"/>
</dbReference>
<dbReference type="Gene3D" id="2.80.10.50">
    <property type="match status" value="4"/>
</dbReference>
<dbReference type="InterPro" id="IPR008999">
    <property type="entry name" value="Actin-crosslinking"/>
</dbReference>
<dbReference type="InterPro" id="IPR010431">
    <property type="entry name" value="Fascin"/>
</dbReference>
<dbReference type="InterPro" id="IPR022768">
    <property type="entry name" value="Fascin-like_dom"/>
</dbReference>
<dbReference type="InterPro" id="IPR024703">
    <property type="entry name" value="Fascin_metazoans"/>
</dbReference>
<dbReference type="PANTHER" id="PTHR10551">
    <property type="entry name" value="FASCIN"/>
    <property type="match status" value="1"/>
</dbReference>
<dbReference type="PANTHER" id="PTHR10551:SF9">
    <property type="entry name" value="FASCIN-2"/>
    <property type="match status" value="1"/>
</dbReference>
<dbReference type="Pfam" id="PF06268">
    <property type="entry name" value="Fascin"/>
    <property type="match status" value="4"/>
</dbReference>
<dbReference type="PIRSF" id="PIRSF005682">
    <property type="entry name" value="Fascin"/>
    <property type="match status" value="1"/>
</dbReference>
<dbReference type="SUPFAM" id="SSF50405">
    <property type="entry name" value="Actin-crosslinking proteins"/>
    <property type="match status" value="4"/>
</dbReference>
<evidence type="ECO:0000250" key="1"/>
<evidence type="ECO:0000269" key="2">
    <source>
    </source>
</evidence>
<evidence type="ECO:0000305" key="3"/>
<reference key="1">
    <citation type="journal article" date="1999" name="Eur. J. Hum. Genet.">
        <title>Refinement of the RP17 locus for autosomal dominant retinitis pigmentosa, construction of a YAC contig and investigation of the candidate gene retinal fascin.</title>
        <authorList>
            <person name="Bardien-Kruger S."/>
            <person name="Greenberg J."/>
            <person name="Tubb B.E."/>
            <person name="Bryan J."/>
            <person name="Queimado L."/>
            <person name="Lovett M."/>
            <person name="Ramesar R.S."/>
        </authorList>
    </citation>
    <scope>NUCLEOTIDE SEQUENCE [MRNA]</scope>
    <source>
        <tissue>Retina</tissue>
    </source>
</reference>
<reference key="2">
    <citation type="journal article" date="2000" name="Genomics">
        <title>Characterization of human retinal fascin gene (FSCN2) at 17q25: close physical linkage of fascin and cytoplasmic actin genes.</title>
        <authorList>
            <person name="Tubb B.E."/>
            <person name="Bardien-Kruger S."/>
            <person name="Kashork C.D."/>
            <person name="Shaffer L.G."/>
            <person name="Ramagli L.S."/>
            <person name="Xu J."/>
            <person name="Siciliano M.J."/>
            <person name="Bryan J."/>
        </authorList>
    </citation>
    <scope>NUCLEOTIDE SEQUENCE [GENOMIC DNA]</scope>
</reference>
<reference key="3">
    <citation type="journal article" date="2006" name="Nature">
        <title>DNA sequence of human chromosome 17 and analysis of rearrangement in the human lineage.</title>
        <authorList>
            <person name="Zody M.C."/>
            <person name="Garber M."/>
            <person name="Adams D.J."/>
            <person name="Sharpe T."/>
            <person name="Harrow J."/>
            <person name="Lupski J.R."/>
            <person name="Nicholson C."/>
            <person name="Searle S.M."/>
            <person name="Wilming L."/>
            <person name="Young S.K."/>
            <person name="Abouelleil A."/>
            <person name="Allen N.R."/>
            <person name="Bi W."/>
            <person name="Bloom T."/>
            <person name="Borowsky M.L."/>
            <person name="Bugalter B.E."/>
            <person name="Butler J."/>
            <person name="Chang J.L."/>
            <person name="Chen C.-K."/>
            <person name="Cook A."/>
            <person name="Corum B."/>
            <person name="Cuomo C.A."/>
            <person name="de Jong P.J."/>
            <person name="DeCaprio D."/>
            <person name="Dewar K."/>
            <person name="FitzGerald M."/>
            <person name="Gilbert J."/>
            <person name="Gibson R."/>
            <person name="Gnerre S."/>
            <person name="Goldstein S."/>
            <person name="Grafham D.V."/>
            <person name="Grocock R."/>
            <person name="Hafez N."/>
            <person name="Hagopian D.S."/>
            <person name="Hart E."/>
            <person name="Norman C.H."/>
            <person name="Humphray S."/>
            <person name="Jaffe D.B."/>
            <person name="Jones M."/>
            <person name="Kamal M."/>
            <person name="Khodiyar V.K."/>
            <person name="LaButti K."/>
            <person name="Laird G."/>
            <person name="Lehoczky J."/>
            <person name="Liu X."/>
            <person name="Lokyitsang T."/>
            <person name="Loveland J."/>
            <person name="Lui A."/>
            <person name="Macdonald P."/>
            <person name="Major J.E."/>
            <person name="Matthews L."/>
            <person name="Mauceli E."/>
            <person name="McCarroll S.A."/>
            <person name="Mihalev A.H."/>
            <person name="Mudge J."/>
            <person name="Nguyen C."/>
            <person name="Nicol R."/>
            <person name="O'Leary S.B."/>
            <person name="Osoegawa K."/>
            <person name="Schwartz D.C."/>
            <person name="Shaw-Smith C."/>
            <person name="Stankiewicz P."/>
            <person name="Steward C."/>
            <person name="Swarbreck D."/>
            <person name="Venkataraman V."/>
            <person name="Whittaker C.A."/>
            <person name="Yang X."/>
            <person name="Zimmer A.R."/>
            <person name="Bradley A."/>
            <person name="Hubbard T."/>
            <person name="Birren B.W."/>
            <person name="Rogers J."/>
            <person name="Lander E.S."/>
            <person name="Nusbaum C."/>
        </authorList>
    </citation>
    <scope>NUCLEOTIDE SEQUENCE [LARGE SCALE GENOMIC DNA]</scope>
</reference>
<reference key="4">
    <citation type="journal article" date="2004" name="Genome Res.">
        <title>The status, quality, and expansion of the NIH full-length cDNA project: the Mammalian Gene Collection (MGC).</title>
        <authorList>
            <consortium name="The MGC Project Team"/>
        </authorList>
    </citation>
    <scope>NUCLEOTIDE SEQUENCE [LARGE SCALE MRNA]</scope>
    <source>
        <tissue>Brain</tissue>
        <tissue>Cerebellum</tissue>
    </source>
</reference>
<reference key="5">
    <citation type="journal article" date="2000" name="Invest. Ophthalmol. Vis. Sci.">
        <title>Retinal fascin: functional nature, subcellular distribution, and chromosomal localization.</title>
        <authorList>
            <person name="Saishin Y."/>
            <person name="Ishikawa R."/>
            <person name="Ugawa S."/>
            <person name="Guo W."/>
            <person name="Ueda T."/>
            <person name="Morimura H."/>
            <person name="Kohama K."/>
            <person name="Shimizu H."/>
            <person name="Tano Y."/>
            <person name="Shimada S."/>
        </authorList>
    </citation>
    <scope>CHARACTERIZATION</scope>
</reference>
<reference key="6">
    <citation type="journal article" date="2001" name="Invest. Ophthalmol. Vis. Sci.">
        <title>Mutation of human retinal fascin gene (FSCN2) causes autosomal dominant retinitis pigmentosa.</title>
        <authorList>
            <person name="Wada Y."/>
            <person name="Abe T."/>
            <person name="Takeshita T."/>
            <person name="Sato H."/>
            <person name="Yanashima K."/>
            <person name="Tamai M."/>
        </authorList>
    </citation>
    <scope>INVOLVEMENT IN RP30</scope>
</reference>
<proteinExistence type="evidence at protein level"/>